<comment type="function">
    <text evidence="1">RuBisCO catalyzes two reactions: the carboxylation of D-ribulose 1,5-bisphosphate, the primary event in carbon dioxide fixation, as well as the oxidative fragmentation of the pentose substrate in the photorespiration process. Both reactions occur simultaneously and in competition at the same active site.</text>
</comment>
<comment type="catalytic activity">
    <reaction evidence="1">
        <text>2 (2R)-3-phosphoglycerate + 2 H(+) = D-ribulose 1,5-bisphosphate + CO2 + H2O</text>
        <dbReference type="Rhea" id="RHEA:23124"/>
        <dbReference type="ChEBI" id="CHEBI:15377"/>
        <dbReference type="ChEBI" id="CHEBI:15378"/>
        <dbReference type="ChEBI" id="CHEBI:16526"/>
        <dbReference type="ChEBI" id="CHEBI:57870"/>
        <dbReference type="ChEBI" id="CHEBI:58272"/>
        <dbReference type="EC" id="4.1.1.39"/>
    </reaction>
</comment>
<comment type="catalytic activity">
    <reaction evidence="1">
        <text>D-ribulose 1,5-bisphosphate + O2 = 2-phosphoglycolate + (2R)-3-phosphoglycerate + 2 H(+)</text>
        <dbReference type="Rhea" id="RHEA:36631"/>
        <dbReference type="ChEBI" id="CHEBI:15378"/>
        <dbReference type="ChEBI" id="CHEBI:15379"/>
        <dbReference type="ChEBI" id="CHEBI:57870"/>
        <dbReference type="ChEBI" id="CHEBI:58033"/>
        <dbReference type="ChEBI" id="CHEBI:58272"/>
    </reaction>
</comment>
<comment type="cofactor">
    <cofactor evidence="1">
        <name>Mg(2+)</name>
        <dbReference type="ChEBI" id="CHEBI:18420"/>
    </cofactor>
    <text evidence="1">Binds 1 Mg(2+) ion per subunit.</text>
</comment>
<comment type="subunit">
    <text evidence="1">Heterohexadecamer of 8 large chains and 8 small chains; disulfide-linked. The disulfide link is formed within the large subunit homodimers.</text>
</comment>
<comment type="subcellular location">
    <subcellularLocation>
        <location>Plastid</location>
        <location>Chloroplast</location>
    </subcellularLocation>
</comment>
<comment type="PTM">
    <text evidence="1">The disulfide bond which can form in the large chain dimeric partners within the hexadecamer appears to be associated with oxidative stress and protein turnover.</text>
</comment>
<comment type="miscellaneous">
    <text evidence="1">The basic functional RuBisCO is composed of a large chain homodimer in a 'head-to-tail' conformation. In form I RuBisCO this homodimer is arranged in a barrel-like tetramer with the small subunits forming a tetrameric 'cap' on each end of the 'barrel'.</text>
</comment>
<comment type="similarity">
    <text evidence="1">Belongs to the RuBisCO large chain family. Type I subfamily.</text>
</comment>
<dbReference type="EC" id="4.1.1.39" evidence="1"/>
<dbReference type="EMBL" id="AJ005624">
    <property type="protein sequence ID" value="CAA06630.1"/>
    <property type="molecule type" value="Genomic_DNA"/>
</dbReference>
<dbReference type="SMR" id="O98681"/>
<dbReference type="GO" id="GO:0009507">
    <property type="term" value="C:chloroplast"/>
    <property type="evidence" value="ECO:0007669"/>
    <property type="project" value="UniProtKB-SubCell"/>
</dbReference>
<dbReference type="GO" id="GO:0000287">
    <property type="term" value="F:magnesium ion binding"/>
    <property type="evidence" value="ECO:0007669"/>
    <property type="project" value="InterPro"/>
</dbReference>
<dbReference type="GO" id="GO:0004497">
    <property type="term" value="F:monooxygenase activity"/>
    <property type="evidence" value="ECO:0007669"/>
    <property type="project" value="UniProtKB-KW"/>
</dbReference>
<dbReference type="GO" id="GO:0016984">
    <property type="term" value="F:ribulose-bisphosphate carboxylase activity"/>
    <property type="evidence" value="ECO:0007669"/>
    <property type="project" value="UniProtKB-EC"/>
</dbReference>
<dbReference type="GO" id="GO:0009853">
    <property type="term" value="P:photorespiration"/>
    <property type="evidence" value="ECO:0007669"/>
    <property type="project" value="UniProtKB-KW"/>
</dbReference>
<dbReference type="GO" id="GO:0019253">
    <property type="term" value="P:reductive pentose-phosphate cycle"/>
    <property type="evidence" value="ECO:0007669"/>
    <property type="project" value="UniProtKB-KW"/>
</dbReference>
<dbReference type="CDD" id="cd08212">
    <property type="entry name" value="RuBisCO_large_I"/>
    <property type="match status" value="1"/>
</dbReference>
<dbReference type="FunFam" id="3.20.20.110:FF:000001">
    <property type="entry name" value="Ribulose bisphosphate carboxylase large chain"/>
    <property type="match status" value="1"/>
</dbReference>
<dbReference type="FunFam" id="3.30.70.150:FF:000001">
    <property type="entry name" value="Ribulose bisphosphate carboxylase large chain"/>
    <property type="match status" value="1"/>
</dbReference>
<dbReference type="Gene3D" id="3.20.20.110">
    <property type="entry name" value="Ribulose bisphosphate carboxylase, large subunit, C-terminal domain"/>
    <property type="match status" value="1"/>
</dbReference>
<dbReference type="Gene3D" id="3.30.70.150">
    <property type="entry name" value="RuBisCO large subunit, N-terminal domain"/>
    <property type="match status" value="1"/>
</dbReference>
<dbReference type="HAMAP" id="MF_01338">
    <property type="entry name" value="RuBisCO_L_type1"/>
    <property type="match status" value="1"/>
</dbReference>
<dbReference type="InterPro" id="IPR033966">
    <property type="entry name" value="RuBisCO"/>
</dbReference>
<dbReference type="InterPro" id="IPR020878">
    <property type="entry name" value="RuBisCo_large_chain_AS"/>
</dbReference>
<dbReference type="InterPro" id="IPR000685">
    <property type="entry name" value="RuBisCO_lsu_C"/>
</dbReference>
<dbReference type="InterPro" id="IPR036376">
    <property type="entry name" value="RuBisCO_lsu_C_sf"/>
</dbReference>
<dbReference type="InterPro" id="IPR017443">
    <property type="entry name" value="RuBisCO_lsu_fd_N"/>
</dbReference>
<dbReference type="InterPro" id="IPR036422">
    <property type="entry name" value="RuBisCO_lsu_N_sf"/>
</dbReference>
<dbReference type="InterPro" id="IPR020888">
    <property type="entry name" value="RuBisCO_lsuI"/>
</dbReference>
<dbReference type="NCBIfam" id="NF003252">
    <property type="entry name" value="PRK04208.1"/>
    <property type="match status" value="1"/>
</dbReference>
<dbReference type="PANTHER" id="PTHR42704">
    <property type="entry name" value="RIBULOSE BISPHOSPHATE CARBOXYLASE"/>
    <property type="match status" value="1"/>
</dbReference>
<dbReference type="PANTHER" id="PTHR42704:SF15">
    <property type="entry name" value="RIBULOSE BISPHOSPHATE CARBOXYLASE LARGE CHAIN"/>
    <property type="match status" value="1"/>
</dbReference>
<dbReference type="Pfam" id="PF00016">
    <property type="entry name" value="RuBisCO_large"/>
    <property type="match status" value="1"/>
</dbReference>
<dbReference type="Pfam" id="PF02788">
    <property type="entry name" value="RuBisCO_large_N"/>
    <property type="match status" value="1"/>
</dbReference>
<dbReference type="SFLD" id="SFLDG01052">
    <property type="entry name" value="RuBisCO"/>
    <property type="match status" value="1"/>
</dbReference>
<dbReference type="SFLD" id="SFLDS00014">
    <property type="entry name" value="RuBisCO"/>
    <property type="match status" value="1"/>
</dbReference>
<dbReference type="SFLD" id="SFLDG00301">
    <property type="entry name" value="RuBisCO-like_proteins"/>
    <property type="match status" value="1"/>
</dbReference>
<dbReference type="SUPFAM" id="SSF51649">
    <property type="entry name" value="RuBisCo, C-terminal domain"/>
    <property type="match status" value="1"/>
</dbReference>
<dbReference type="SUPFAM" id="SSF54966">
    <property type="entry name" value="RuBisCO, large subunit, small (N-terminal) domain"/>
    <property type="match status" value="1"/>
</dbReference>
<dbReference type="PROSITE" id="PS00157">
    <property type="entry name" value="RUBISCO_LARGE"/>
    <property type="match status" value="1"/>
</dbReference>
<geneLocation type="chloroplast"/>
<feature type="chain" id="PRO_0000062617" description="Ribulose bisphosphate carboxylase large chain">
    <location>
        <begin position="1" status="less than"/>
        <end position="449" status="greater than"/>
    </location>
</feature>
<feature type="active site" description="Proton acceptor" evidence="1">
    <location>
        <position position="166"/>
    </location>
</feature>
<feature type="active site" description="Proton acceptor" evidence="1">
    <location>
        <position position="285"/>
    </location>
</feature>
<feature type="binding site" description="in homodimeric partner" evidence="1">
    <location>
        <position position="114"/>
    </location>
    <ligand>
        <name>substrate</name>
    </ligand>
</feature>
<feature type="binding site" evidence="1">
    <location>
        <position position="164"/>
    </location>
    <ligand>
        <name>substrate</name>
    </ligand>
</feature>
<feature type="binding site" evidence="1">
    <location>
        <position position="168"/>
    </location>
    <ligand>
        <name>substrate</name>
    </ligand>
</feature>
<feature type="binding site" description="via carbamate group" evidence="1">
    <location>
        <position position="192"/>
    </location>
    <ligand>
        <name>Mg(2+)</name>
        <dbReference type="ChEBI" id="CHEBI:18420"/>
    </ligand>
</feature>
<feature type="binding site" evidence="1">
    <location>
        <position position="194"/>
    </location>
    <ligand>
        <name>Mg(2+)</name>
        <dbReference type="ChEBI" id="CHEBI:18420"/>
    </ligand>
</feature>
<feature type="binding site" evidence="1">
    <location>
        <position position="195"/>
    </location>
    <ligand>
        <name>Mg(2+)</name>
        <dbReference type="ChEBI" id="CHEBI:18420"/>
    </ligand>
</feature>
<feature type="binding site" evidence="1">
    <location>
        <position position="286"/>
    </location>
    <ligand>
        <name>substrate</name>
    </ligand>
</feature>
<feature type="binding site" evidence="1">
    <location>
        <position position="318"/>
    </location>
    <ligand>
        <name>substrate</name>
    </ligand>
</feature>
<feature type="binding site" evidence="1">
    <location>
        <position position="370"/>
    </location>
    <ligand>
        <name>substrate</name>
    </ligand>
</feature>
<feature type="site" description="Transition state stabilizer" evidence="1">
    <location>
        <position position="325"/>
    </location>
</feature>
<feature type="modified residue" description="N6,N6,N6-trimethyllysine" evidence="1">
    <location>
        <position position="5"/>
    </location>
</feature>
<feature type="modified residue" description="N6-carboxylysine" evidence="1">
    <location>
        <position position="192"/>
    </location>
</feature>
<feature type="disulfide bond" description="Interchain; in linked form" evidence="1">
    <location>
        <position position="238"/>
    </location>
</feature>
<feature type="non-terminal residue">
    <location>
        <position position="1"/>
    </location>
</feature>
<feature type="non-terminal residue">
    <location>
        <position position="449"/>
    </location>
</feature>
<protein>
    <recommendedName>
        <fullName evidence="1">Ribulose bisphosphate carboxylase large chain</fullName>
        <shortName evidence="1">RuBisCO large subunit</shortName>
        <ecNumber evidence="1">4.1.1.39</ecNumber>
    </recommendedName>
</protein>
<proteinExistence type="inferred from homology"/>
<gene>
    <name evidence="1" type="primary">rbcL</name>
</gene>
<keyword id="KW-0113">Calvin cycle</keyword>
<keyword id="KW-0120">Carbon dioxide fixation</keyword>
<keyword id="KW-0150">Chloroplast</keyword>
<keyword id="KW-1015">Disulfide bond</keyword>
<keyword id="KW-0456">Lyase</keyword>
<keyword id="KW-0460">Magnesium</keyword>
<keyword id="KW-0479">Metal-binding</keyword>
<keyword id="KW-0488">Methylation</keyword>
<keyword id="KW-0503">Monooxygenase</keyword>
<keyword id="KW-0560">Oxidoreductase</keyword>
<keyword id="KW-0601">Photorespiration</keyword>
<keyword id="KW-0602">Photosynthesis</keyword>
<keyword id="KW-0934">Plastid</keyword>
<organism>
    <name type="scientific">Zamioculcas zamiifolia</name>
    <name type="common">Aroid palm</name>
    <name type="synonym">Caladium zamiifolium</name>
    <dbReference type="NCBI Taxonomy" id="78374"/>
    <lineage>
        <taxon>Eukaryota</taxon>
        <taxon>Viridiplantae</taxon>
        <taxon>Streptophyta</taxon>
        <taxon>Embryophyta</taxon>
        <taxon>Tracheophyta</taxon>
        <taxon>Spermatophyta</taxon>
        <taxon>Magnoliopsida</taxon>
        <taxon>Liliopsida</taxon>
        <taxon>Araceae</taxon>
        <taxon>Aroideae</taxon>
        <taxon>Caladieae</taxon>
        <taxon>Zamioculcas</taxon>
    </lineage>
</organism>
<accession>O98681</accession>
<sequence length="449" mass="49547">SVGFKAGVKDYKLTYYTPDYETKDTDILAAFRVTPQPGVPPEEAGAAVAAESSTGTWTTVWTDGLTSLDRYKGRCYHIEAVVGEDNQYIAYVAYPLDLFEEGSVTNMLTSIVGNVFGFKALRALRLEDLRIPPAYSKTFQGPPHGIQVERDKLNKYGRPLLGCTIKPKLGLSAKNYGRAVYECLRGGLDFTKDDENVNSQPFMRWRDRFVFCAEALYKAQAETGEIKGHYLNATAGTCEEMMKRAVFARELGAPIVMHDYLTGGFTANTSLAHYCRDNGLLLHIHRAMHAVIDRQKNHGMHFRVLAKALRMSGGDHIHGGTVVGKLEGEREITLGFVDLLRDDYIEKDRSRGIFFTQDWVSMPGVIPVASGGIHVWHMPALTEIFGDDSVLQFGGGTLGHPWGNAPGAVANRVALEACVQARNEGRDLAREGNEIIREASKWSPELAAA</sequence>
<evidence type="ECO:0000255" key="1">
    <source>
        <dbReference type="HAMAP-Rule" id="MF_01338"/>
    </source>
</evidence>
<name>RBL_ZAMZA</name>
<reference key="1">
    <citation type="submission" date="1998-04" db="EMBL/GenBank/DDBJ databases">
        <title>Recent coxI group I intron transfer within the family Araceae.</title>
        <authorList>
            <person name="Cho Y."/>
            <person name="Palmer J.D."/>
        </authorList>
    </citation>
    <scope>NUCLEOTIDE SEQUENCE [GENOMIC DNA]</scope>
</reference>